<proteinExistence type="inferred from homology"/>
<gene>
    <name evidence="1" type="primary">rlmL</name>
    <name type="ordered locus">KPN78578_09520</name>
    <name type="ORF">KPN_00977</name>
</gene>
<organism>
    <name type="scientific">Klebsiella pneumoniae subsp. pneumoniae (strain ATCC 700721 / MGH 78578)</name>
    <dbReference type="NCBI Taxonomy" id="272620"/>
    <lineage>
        <taxon>Bacteria</taxon>
        <taxon>Pseudomonadati</taxon>
        <taxon>Pseudomonadota</taxon>
        <taxon>Gammaproteobacteria</taxon>
        <taxon>Enterobacterales</taxon>
        <taxon>Enterobacteriaceae</taxon>
        <taxon>Klebsiella/Raoultella group</taxon>
        <taxon>Klebsiella</taxon>
        <taxon>Klebsiella pneumoniae complex</taxon>
    </lineage>
</organism>
<dbReference type="EC" id="2.1.1.173" evidence="1"/>
<dbReference type="EC" id="2.1.1.264" evidence="1"/>
<dbReference type="EMBL" id="CP000647">
    <property type="protein sequence ID" value="ABR76413.1"/>
    <property type="molecule type" value="Genomic_DNA"/>
</dbReference>
<dbReference type="SMR" id="A6T742"/>
<dbReference type="STRING" id="272620.KPN_00977"/>
<dbReference type="PaxDb" id="272620-KPN_00977"/>
<dbReference type="EnsemblBacteria" id="ABR76413">
    <property type="protein sequence ID" value="ABR76413"/>
    <property type="gene ID" value="KPN_00977"/>
</dbReference>
<dbReference type="KEGG" id="kpn:KPN_00977"/>
<dbReference type="HOGENOM" id="CLU_014042_2_0_6"/>
<dbReference type="Proteomes" id="UP000000265">
    <property type="component" value="Chromosome"/>
</dbReference>
<dbReference type="GO" id="GO:0005737">
    <property type="term" value="C:cytoplasm"/>
    <property type="evidence" value="ECO:0007669"/>
    <property type="project" value="UniProtKB-SubCell"/>
</dbReference>
<dbReference type="GO" id="GO:0052915">
    <property type="term" value="F:23S rRNA (guanine(2445)-N(2))-methyltransferase activity"/>
    <property type="evidence" value="ECO:0007669"/>
    <property type="project" value="UniProtKB-UniRule"/>
</dbReference>
<dbReference type="GO" id="GO:0003723">
    <property type="term" value="F:RNA binding"/>
    <property type="evidence" value="ECO:0007669"/>
    <property type="project" value="UniProtKB-KW"/>
</dbReference>
<dbReference type="GO" id="GO:0070043">
    <property type="term" value="F:rRNA (guanine-N7-)-methyltransferase activity"/>
    <property type="evidence" value="ECO:0007669"/>
    <property type="project" value="UniProtKB-UniRule"/>
</dbReference>
<dbReference type="CDD" id="cd02440">
    <property type="entry name" value="AdoMet_MTases"/>
    <property type="match status" value="1"/>
</dbReference>
<dbReference type="CDD" id="cd11715">
    <property type="entry name" value="THUMP_AdoMetMT"/>
    <property type="match status" value="1"/>
</dbReference>
<dbReference type="FunFam" id="3.30.750.80:FF:000001">
    <property type="entry name" value="Ribosomal RNA large subunit methyltransferase K/L"/>
    <property type="match status" value="1"/>
</dbReference>
<dbReference type="FunFam" id="3.40.50.150:FF:000039">
    <property type="entry name" value="Ribosomal RNA large subunit methyltransferase K/L"/>
    <property type="match status" value="1"/>
</dbReference>
<dbReference type="Gene3D" id="3.30.2130.30">
    <property type="match status" value="1"/>
</dbReference>
<dbReference type="Gene3D" id="3.30.750.80">
    <property type="entry name" value="RNA methyltransferase domain (HRMD) like"/>
    <property type="match status" value="1"/>
</dbReference>
<dbReference type="Gene3D" id="3.40.50.150">
    <property type="entry name" value="Vaccinia Virus protein VP39"/>
    <property type="match status" value="2"/>
</dbReference>
<dbReference type="HAMAP" id="MF_01858">
    <property type="entry name" value="23SrRNA_methyltr_KL"/>
    <property type="match status" value="1"/>
</dbReference>
<dbReference type="InterPro" id="IPR017244">
    <property type="entry name" value="23SrRNA_methyltr_KL"/>
</dbReference>
<dbReference type="InterPro" id="IPR002052">
    <property type="entry name" value="DNA_methylase_N6_adenine_CS"/>
</dbReference>
<dbReference type="InterPro" id="IPR000241">
    <property type="entry name" value="RlmKL-like_Mtase"/>
</dbReference>
<dbReference type="InterPro" id="IPR053943">
    <property type="entry name" value="RlmKL-like_Mtase_CS"/>
</dbReference>
<dbReference type="InterPro" id="IPR054170">
    <property type="entry name" value="RlmL_1st"/>
</dbReference>
<dbReference type="InterPro" id="IPR019614">
    <property type="entry name" value="SAM-dep_methyl-trfase"/>
</dbReference>
<dbReference type="InterPro" id="IPR029063">
    <property type="entry name" value="SAM-dependent_MTases_sf"/>
</dbReference>
<dbReference type="InterPro" id="IPR004114">
    <property type="entry name" value="THUMP_dom"/>
</dbReference>
<dbReference type="NCBIfam" id="NF008748">
    <property type="entry name" value="PRK11783.1"/>
    <property type="match status" value="1"/>
</dbReference>
<dbReference type="PANTHER" id="PTHR47313">
    <property type="entry name" value="RIBOSOMAL RNA LARGE SUBUNIT METHYLTRANSFERASE K/L"/>
    <property type="match status" value="1"/>
</dbReference>
<dbReference type="PANTHER" id="PTHR47313:SF1">
    <property type="entry name" value="RIBOSOMAL RNA LARGE SUBUNIT METHYLTRANSFERASE K_L"/>
    <property type="match status" value="1"/>
</dbReference>
<dbReference type="Pfam" id="PF10672">
    <property type="entry name" value="Methyltrans_SAM"/>
    <property type="match status" value="1"/>
</dbReference>
<dbReference type="Pfam" id="PF22020">
    <property type="entry name" value="RlmL_1st"/>
    <property type="match status" value="1"/>
</dbReference>
<dbReference type="Pfam" id="PF02926">
    <property type="entry name" value="THUMP"/>
    <property type="match status" value="1"/>
</dbReference>
<dbReference type="Pfam" id="PF01170">
    <property type="entry name" value="UPF0020"/>
    <property type="match status" value="1"/>
</dbReference>
<dbReference type="PIRSF" id="PIRSF037618">
    <property type="entry name" value="RNA_Mtase_bacteria_prd"/>
    <property type="match status" value="1"/>
</dbReference>
<dbReference type="PRINTS" id="PR00507">
    <property type="entry name" value="N12N6MTFRASE"/>
</dbReference>
<dbReference type="SMART" id="SM00981">
    <property type="entry name" value="THUMP"/>
    <property type="match status" value="1"/>
</dbReference>
<dbReference type="SUPFAM" id="SSF53335">
    <property type="entry name" value="S-adenosyl-L-methionine-dependent methyltransferases"/>
    <property type="match status" value="2"/>
</dbReference>
<dbReference type="PROSITE" id="PS51165">
    <property type="entry name" value="THUMP"/>
    <property type="match status" value="1"/>
</dbReference>
<dbReference type="PROSITE" id="PS01261">
    <property type="entry name" value="UPF0020"/>
    <property type="match status" value="1"/>
</dbReference>
<reference key="1">
    <citation type="submission" date="2006-09" db="EMBL/GenBank/DDBJ databases">
        <authorList>
            <consortium name="The Klebsiella pneumonia Genome Sequencing Project"/>
            <person name="McClelland M."/>
            <person name="Sanderson E.K."/>
            <person name="Spieth J."/>
            <person name="Clifton W.S."/>
            <person name="Latreille P."/>
            <person name="Sabo A."/>
            <person name="Pepin K."/>
            <person name="Bhonagiri V."/>
            <person name="Porwollik S."/>
            <person name="Ali J."/>
            <person name="Wilson R.K."/>
        </authorList>
    </citation>
    <scope>NUCLEOTIDE SEQUENCE [LARGE SCALE GENOMIC DNA]</scope>
    <source>
        <strain>ATCC 700721 / MGH 78578</strain>
    </source>
</reference>
<keyword id="KW-0963">Cytoplasm</keyword>
<keyword id="KW-0489">Methyltransferase</keyword>
<keyword id="KW-0694">RNA-binding</keyword>
<keyword id="KW-0698">rRNA processing</keyword>
<keyword id="KW-0949">S-adenosyl-L-methionine</keyword>
<keyword id="KW-0808">Transferase</keyword>
<evidence type="ECO:0000255" key="1">
    <source>
        <dbReference type="HAMAP-Rule" id="MF_01858"/>
    </source>
</evidence>
<comment type="function">
    <text evidence="1">Specifically methylates the guanine in position 2445 (m2G2445) and the guanine in position 2069 (m7G2069) of 23S rRNA.</text>
</comment>
<comment type="catalytic activity">
    <reaction evidence="1">
        <text>guanosine(2445) in 23S rRNA + S-adenosyl-L-methionine = N(2)-methylguanosine(2445) in 23S rRNA + S-adenosyl-L-homocysteine + H(+)</text>
        <dbReference type="Rhea" id="RHEA:42740"/>
        <dbReference type="Rhea" id="RHEA-COMP:10215"/>
        <dbReference type="Rhea" id="RHEA-COMP:10216"/>
        <dbReference type="ChEBI" id="CHEBI:15378"/>
        <dbReference type="ChEBI" id="CHEBI:57856"/>
        <dbReference type="ChEBI" id="CHEBI:59789"/>
        <dbReference type="ChEBI" id="CHEBI:74269"/>
        <dbReference type="ChEBI" id="CHEBI:74481"/>
        <dbReference type="EC" id="2.1.1.173"/>
    </reaction>
</comment>
<comment type="catalytic activity">
    <reaction evidence="1">
        <text>guanosine(2069) in 23S rRNA + S-adenosyl-L-methionine = N(2)-methylguanosine(2069) in 23S rRNA + S-adenosyl-L-homocysteine + H(+)</text>
        <dbReference type="Rhea" id="RHEA:43772"/>
        <dbReference type="Rhea" id="RHEA-COMP:10688"/>
        <dbReference type="Rhea" id="RHEA-COMP:10689"/>
        <dbReference type="ChEBI" id="CHEBI:15378"/>
        <dbReference type="ChEBI" id="CHEBI:57856"/>
        <dbReference type="ChEBI" id="CHEBI:59789"/>
        <dbReference type="ChEBI" id="CHEBI:74269"/>
        <dbReference type="ChEBI" id="CHEBI:74481"/>
        <dbReference type="EC" id="2.1.1.264"/>
    </reaction>
</comment>
<comment type="subcellular location">
    <subcellularLocation>
        <location evidence="1">Cytoplasm</location>
    </subcellularLocation>
</comment>
<comment type="similarity">
    <text evidence="1">Belongs to the methyltransferase superfamily. RlmKL family.</text>
</comment>
<feature type="chain" id="PRO_0000366768" description="Ribosomal RNA large subunit methyltransferase K/L">
    <location>
        <begin position="1"/>
        <end position="701"/>
    </location>
</feature>
<feature type="domain" description="THUMP" evidence="1">
    <location>
        <begin position="43"/>
        <end position="154"/>
    </location>
</feature>
<sequence length="701" mass="78911">MNSLFASTARGLEELLKTELEGLGATDCQVVQGGVHFQGDTRLLYQSLMWSRLASRIMLPLGECRVYSDLDLYLGVQAIPWTEMFNPGATFAVHFSGLNDEIRNSQYGALKVKDAIVDSFTRKNLPRPNVDRESPDLRINVWLNKETAHISLDLSGEGLHLRGYRDGTGMAPIKENLAAAIVMRSGWVPGTPLLDPMCGSGTLLIEAAMLATDRAPGLHRGHWGFGGWAQHDDAIWKEVKAEAQTRARQGLAAYESRFYGSDVDARVIERARRNARRAGIGELIDFDVKDVAQLNNPLPKGPYGTVISNPPYGERLESEPALIALHSLLGRIMKSQFGGWNLSVFSASPELLSCLQLRADKQFKAKNGPLDCVQKNYHLAESEGGKPAMLAEDFANRLRKNLKKFEKWARQEGIECYRLYDADLPEYNVAIDRYADWVVVQEYAPPKTVDAHKARQRLFDIIAATIAVLDMAPNKLVLKTRERQKGKNQYQKMAEKGDFIEVQEYNARLWVNLTDYLDTGLFLDHRIARRMLGQMSKGKDFLNLFSYTGSASVHAGLGGARSTTTVDMSRTYLEWAERNLRLNGLTGRAHRLMQADVLGWLRESTEQFDLIFIDPPTFSNSKRMEDAFDVQRDHIRLMTDLKRLLRKGGTIMFSNNKRGFRMDHDGLAALGLKAQEISQKTLSQDFARNRQIHNCWLITAA</sequence>
<protein>
    <recommendedName>
        <fullName evidence="1">Ribosomal RNA large subunit methyltransferase K/L</fullName>
    </recommendedName>
    <domain>
        <recommendedName>
            <fullName evidence="1">23S rRNA m2G2445 methyltransferase</fullName>
            <ecNumber evidence="1">2.1.1.173</ecNumber>
        </recommendedName>
        <alternativeName>
            <fullName evidence="1">rRNA (guanine-N(2)-)-methyltransferase RlmL</fullName>
        </alternativeName>
    </domain>
    <domain>
        <recommendedName>
            <fullName evidence="1">23S rRNA m7G2069 methyltransferase</fullName>
            <ecNumber evidence="1">2.1.1.264</ecNumber>
        </recommendedName>
        <alternativeName>
            <fullName evidence="1">rRNA (guanine-N(7)-)-methyltransferase RlmK</fullName>
        </alternativeName>
    </domain>
</protein>
<accession>A6T742</accession>
<name>RLMKL_KLEP7</name>